<keyword id="KW-0025">Alternative splicing</keyword>
<keyword id="KW-0539">Nucleus</keyword>
<keyword id="KW-1185">Reference proteome</keyword>
<keyword id="KW-0678">Repressor</keyword>
<keyword id="KW-0804">Transcription</keyword>
<keyword id="KW-0805">Transcription regulation</keyword>
<proteinExistence type="evidence at protein level"/>
<evidence type="ECO:0000256" key="1">
    <source>
        <dbReference type="SAM" id="MobiDB-lite"/>
    </source>
</evidence>
<evidence type="ECO:0000269" key="2">
    <source>
    </source>
</evidence>
<evidence type="ECO:0000269" key="3">
    <source>
    </source>
</evidence>
<evidence type="ECO:0000269" key="4">
    <source>
    </source>
</evidence>
<evidence type="ECO:0000305" key="5"/>
<evidence type="ECO:0000312" key="6">
    <source>
        <dbReference type="WormBase" id="ZK632.13a"/>
    </source>
</evidence>
<evidence type="ECO:0000312" key="7">
    <source>
        <dbReference type="WormBase" id="ZK632.13b"/>
    </source>
</evidence>
<feature type="chain" id="PRO_0000084430" description="Protein lin-52">
    <location>
        <begin position="1"/>
        <end position="161"/>
    </location>
</feature>
<feature type="region of interest" description="Disordered" evidence="1">
    <location>
        <begin position="137"/>
        <end position="161"/>
    </location>
</feature>
<feature type="splice variant" id="VSP_060463" description="In isoform b." evidence="5">
    <location>
        <begin position="1"/>
        <end position="40"/>
    </location>
</feature>
<feature type="mutagenesis site" description="In n771; temperature-sensitive multivulva phenotype in a lin-8 n111, n2741, n2376, n2378, n2403, n2738, n2731 or n2739 mutant background." evidence="2">
    <original>E</original>
    <variation>K</variation>
    <location>
        <position position="36"/>
    </location>
</feature>
<protein>
    <recommendedName>
        <fullName>Protein lin-52</fullName>
    </recommendedName>
    <alternativeName>
        <fullName>Abnormal cell lineage protein 52</fullName>
    </alternativeName>
</protein>
<sequence>MSRPLGFIGYEFGDDEMFVQQMIEKKSNAEQAKMLEQQKKMLECTETMPEESEPVPMKCLDFEEAFQSESVSKGYESPYKNISFLKEDAVTVNTMSHCPADDIAKLIRNIQNSVYTLGIEEARQCRRGKLLNVLKPTGSASPRYLQPTPPKNVAEETTGSQ</sequence>
<dbReference type="EMBL" id="AY324109">
    <property type="protein sequence ID" value="AAP85302.1"/>
    <property type="molecule type" value="mRNA"/>
</dbReference>
<dbReference type="EMBL" id="BX284603">
    <property type="protein sequence ID" value="CAA80188.1"/>
    <property type="molecule type" value="Genomic_DNA"/>
</dbReference>
<dbReference type="EMBL" id="BX284603">
    <property type="protein sequence ID" value="CCD31173.1"/>
    <property type="molecule type" value="Genomic_DNA"/>
</dbReference>
<dbReference type="PIR" id="H88566">
    <property type="entry name" value="H88566"/>
</dbReference>
<dbReference type="RefSeq" id="NP_001255033.1">
    <molecule id="Q10120-1"/>
    <property type="nucleotide sequence ID" value="NM_001268104.2"/>
</dbReference>
<dbReference type="RefSeq" id="NP_001255034.1">
    <molecule id="Q10120-2"/>
    <property type="nucleotide sequence ID" value="NM_001268105.3"/>
</dbReference>
<dbReference type="SMR" id="Q10120"/>
<dbReference type="BioGRID" id="41587">
    <property type="interactions" value="3"/>
</dbReference>
<dbReference type="ComplexPortal" id="CPX-1100">
    <property type="entry name" value="DRM complex"/>
</dbReference>
<dbReference type="DIP" id="DIP-61305N"/>
<dbReference type="FunCoup" id="Q10120">
    <property type="interactions" value="32"/>
</dbReference>
<dbReference type="IntAct" id="Q10120">
    <property type="interactions" value="6"/>
</dbReference>
<dbReference type="STRING" id="6239.ZK632.13a.1"/>
<dbReference type="PaxDb" id="6239-ZK632.13a"/>
<dbReference type="PeptideAtlas" id="Q10120"/>
<dbReference type="EnsemblMetazoa" id="ZK632.13a.1">
    <molecule id="Q10120-1"/>
    <property type="protein sequence ID" value="ZK632.13a.1"/>
    <property type="gene ID" value="WBGene00003035"/>
</dbReference>
<dbReference type="EnsemblMetazoa" id="ZK632.13b.1">
    <molecule id="Q10120-2"/>
    <property type="protein sequence ID" value="ZK632.13b.1"/>
    <property type="gene ID" value="WBGene00003035"/>
</dbReference>
<dbReference type="GeneID" id="176393"/>
<dbReference type="KEGG" id="cel:CELE_ZK632.13"/>
<dbReference type="UCSC" id="ZK632.13.1">
    <molecule id="Q10120-1"/>
    <property type="organism name" value="c. elegans"/>
</dbReference>
<dbReference type="AGR" id="WB:WBGene00003035"/>
<dbReference type="CTD" id="31499"/>
<dbReference type="WormBase" id="ZK632.13a">
    <molecule id="Q10120-1"/>
    <property type="protein sequence ID" value="CE01711"/>
    <property type="gene ID" value="WBGene00003035"/>
    <property type="gene designation" value="lin-52"/>
</dbReference>
<dbReference type="WormBase" id="ZK632.13b">
    <molecule id="Q10120-2"/>
    <property type="protein sequence ID" value="CE46358"/>
    <property type="gene ID" value="WBGene00003035"/>
    <property type="gene designation" value="lin-52"/>
</dbReference>
<dbReference type="eggNOG" id="KOG4402">
    <property type="taxonomic scope" value="Eukaryota"/>
</dbReference>
<dbReference type="GeneTree" id="ENSGT00390000008402"/>
<dbReference type="HOGENOM" id="CLU_138751_0_0_1"/>
<dbReference type="InParanoid" id="Q10120"/>
<dbReference type="OMA" id="NTMSHCP"/>
<dbReference type="OrthoDB" id="5834362at2759"/>
<dbReference type="Reactome" id="R-CEL-1538133">
    <property type="pathway name" value="G0 and Early G1"/>
</dbReference>
<dbReference type="SignaLink" id="Q10120"/>
<dbReference type="PRO" id="PR:Q10120"/>
<dbReference type="Proteomes" id="UP000001940">
    <property type="component" value="Chromosome III"/>
</dbReference>
<dbReference type="Bgee" id="WBGene00003035">
    <property type="expression patterns" value="Expressed in embryo and 4 other cell types or tissues"/>
</dbReference>
<dbReference type="GO" id="GO:0070176">
    <property type="term" value="C:DRM complex"/>
    <property type="evidence" value="ECO:0000314"/>
    <property type="project" value="ComplexPortal"/>
</dbReference>
<dbReference type="GO" id="GO:0009792">
    <property type="term" value="P:embryo development ending in birth or egg hatching"/>
    <property type="evidence" value="ECO:0000315"/>
    <property type="project" value="WormBase"/>
</dbReference>
<dbReference type="GO" id="GO:0009968">
    <property type="term" value="P:negative regulation of signal transduction"/>
    <property type="evidence" value="ECO:0000315"/>
    <property type="project" value="WormBase"/>
</dbReference>
<dbReference type="GO" id="GO:0040027">
    <property type="term" value="P:negative regulation of vulval development"/>
    <property type="evidence" value="ECO:0000314"/>
    <property type="project" value="ComplexPortal"/>
</dbReference>
<dbReference type="GO" id="GO:0006355">
    <property type="term" value="P:regulation of DNA-templated transcription"/>
    <property type="evidence" value="ECO:0000303"/>
    <property type="project" value="ComplexPortal"/>
</dbReference>
<dbReference type="GO" id="GO:0050767">
    <property type="term" value="P:regulation of neurogenesis"/>
    <property type="evidence" value="ECO:0000315"/>
    <property type="project" value="UniProtKB"/>
</dbReference>
<dbReference type="InterPro" id="IPR018737">
    <property type="entry name" value="DREAM_LIN52"/>
</dbReference>
<dbReference type="PANTHER" id="PTHR31489">
    <property type="entry name" value="LIN52 FAMILY MEMBER"/>
    <property type="match status" value="1"/>
</dbReference>
<dbReference type="PANTHER" id="PTHR31489:SF2">
    <property type="entry name" value="PROTEIN LIN-52 HOMOLOG"/>
    <property type="match status" value="1"/>
</dbReference>
<dbReference type="Pfam" id="PF10044">
    <property type="entry name" value="LIN52"/>
    <property type="match status" value="1"/>
</dbReference>
<comment type="function">
    <text evidence="2 3 4">Synthetic multivulva class B (synMuvB) protein (PubMed:16020796, PubMed:17075059). SynMuvB proteins are required to repress the induction of vulval development by Ras signaling and probably act by forming the multiprotein DRM complex that represses transcription (PubMed:17075059). In association with the zinc finger protein ztf-11, negatively regulates the expression of non-neuronal genes during neurogenesis (PubMed:31386623).</text>
</comment>
<comment type="subunit">
    <text evidence="3 4">Component of the DRM complex, at least composed of lin-9, lin-35, lin-37, lin-52, lin-53, lin-54- dpl-1 and efl-1 (PubMed:17075059). Interacts with zft-11; the interaction is required to suppress the activation of non-neuronal genes in neurons (PubMed:31386623).</text>
</comment>
<comment type="subcellular location">
    <subcellularLocation>
        <location evidence="5">Nucleus</location>
    </subcellularLocation>
</comment>
<comment type="alternative products">
    <event type="alternative splicing"/>
    <isoform>
        <id>Q10120-1</id>
        <name evidence="6">a</name>
        <sequence type="displayed"/>
    </isoform>
    <isoform>
        <id>Q10120-2</id>
        <name evidence="7">b</name>
        <sequence type="described" ref="VSP_060463"/>
    </isoform>
</comment>
<comment type="similarity">
    <text evidence="5">Belongs to the lin-52 family.</text>
</comment>
<reference key="1">
    <citation type="journal article" date="2003" name="Genetics">
        <title>New genes that interact with lin-35 Rb to negatively regulate the let-60 ras pathway in Caenorhabditis elegans.</title>
        <authorList>
            <person name="Thomas J.H."/>
            <person name="Ceol C.J."/>
            <person name="Schwartz H.T."/>
            <person name="Horvitz H.R."/>
        </authorList>
    </citation>
    <scope>NUCLEOTIDE SEQUENCE [MRNA] (ISOFORM A)</scope>
    <scope>INTERACTION WITH LIN-35</scope>
</reference>
<reference key="2">
    <citation type="journal article" date="1994" name="Nature">
        <title>2.2 Mb of contiguous nucleotide sequence from chromosome III of C. elegans.</title>
        <authorList>
            <person name="Wilson R."/>
            <person name="Ainscough R."/>
            <person name="Anderson K."/>
            <person name="Baynes C."/>
            <person name="Berks M."/>
            <person name="Bonfield J."/>
            <person name="Burton J."/>
            <person name="Connell M."/>
            <person name="Copsey T."/>
            <person name="Cooper J."/>
            <person name="Coulson A."/>
            <person name="Craxton M."/>
            <person name="Dear S."/>
            <person name="Du Z."/>
            <person name="Durbin R."/>
            <person name="Favello A."/>
            <person name="Fraser A."/>
            <person name="Fulton L."/>
            <person name="Gardner A."/>
            <person name="Green P."/>
            <person name="Hawkins T."/>
            <person name="Hillier L."/>
            <person name="Jier M."/>
            <person name="Johnston L."/>
            <person name="Jones M."/>
            <person name="Kershaw J."/>
            <person name="Kirsten J."/>
            <person name="Laisster N."/>
            <person name="Latreille P."/>
            <person name="Lightning J."/>
            <person name="Lloyd C."/>
            <person name="Mortimore B."/>
            <person name="O'Callaghan M."/>
            <person name="Parsons J."/>
            <person name="Percy C."/>
            <person name="Rifken L."/>
            <person name="Roopra A."/>
            <person name="Saunders D."/>
            <person name="Shownkeen R."/>
            <person name="Sims M."/>
            <person name="Smaldon N."/>
            <person name="Smith A."/>
            <person name="Smith M."/>
            <person name="Sonnhammer E."/>
            <person name="Staden R."/>
            <person name="Sulston J."/>
            <person name="Thierry-Mieg J."/>
            <person name="Thomas K."/>
            <person name="Vaudin M."/>
            <person name="Vaughan K."/>
            <person name="Waterston R."/>
            <person name="Watson A."/>
            <person name="Weinstock L."/>
            <person name="Wilkinson-Sproat J."/>
            <person name="Wohldman P."/>
        </authorList>
    </citation>
    <scope>NUCLEOTIDE SEQUENCE [LARGE SCALE GENOMIC DNA]</scope>
    <source>
        <strain>Bristol N2</strain>
    </source>
</reference>
<reference key="3">
    <citation type="journal article" date="1998" name="Science">
        <title>Genome sequence of the nematode C. elegans: a platform for investigating biology.</title>
        <authorList>
            <consortium name="The C. elegans sequencing consortium"/>
        </authorList>
    </citation>
    <scope>NUCLEOTIDE SEQUENCE [LARGE SCALE GENOMIC DNA]</scope>
    <source>
        <strain>Bristol N2</strain>
    </source>
</reference>
<reference key="4">
    <citation type="journal article" date="2005" name="Genetics">
        <title>lin-8, which antagonizes Caenorhabditis elegans Ras-mediated vulval induction, encodes a novel nuclear protein that interacts with the LIN-35 Rb protein.</title>
        <authorList>
            <person name="Davison E.M."/>
            <person name="Harrison M.M."/>
            <person name="Walhout A.J."/>
            <person name="Vidal M."/>
            <person name="Horvitz H.R."/>
        </authorList>
    </citation>
    <scope>FUNCTION</scope>
    <scope>MUTAGENESIS OF GLU-36</scope>
</reference>
<reference key="5">
    <citation type="journal article" date="2006" name="Proc. Natl. Acad. Sci. U.S.A.">
        <title>Some C. elegans class B synthetic multivulva proteins encode a conserved LIN-35 Rb-containing complex distinct from a NuRD-like complex.</title>
        <authorList>
            <person name="Harrison M.M."/>
            <person name="Ceol C.J."/>
            <person name="Lu X."/>
            <person name="Horvitz H.R."/>
        </authorList>
    </citation>
    <scope>FUNCTION</scope>
    <scope>IDENTIFICATION IN THE DRM COMPLEX</scope>
</reference>
<reference key="6">
    <citation type="journal article" date="2019" name="Elife">
        <title>A Myt1 family transcription factor defines neuronal fate by repressing non-neuronal genes.</title>
        <authorList>
            <person name="Lee J."/>
            <person name="Taylor C.A."/>
            <person name="Barnes K.M."/>
            <person name="Shen A."/>
            <person name="Stewart E.V."/>
            <person name="Chen A."/>
            <person name="Xiang Y.K."/>
            <person name="Bao Z."/>
            <person name="Shen K."/>
        </authorList>
    </citation>
    <scope>FUNCTION</scope>
    <scope>INTERACTION WITH ZTF-11</scope>
</reference>
<organism>
    <name type="scientific">Caenorhabditis elegans</name>
    <dbReference type="NCBI Taxonomy" id="6239"/>
    <lineage>
        <taxon>Eukaryota</taxon>
        <taxon>Metazoa</taxon>
        <taxon>Ecdysozoa</taxon>
        <taxon>Nematoda</taxon>
        <taxon>Chromadorea</taxon>
        <taxon>Rhabditida</taxon>
        <taxon>Rhabditina</taxon>
        <taxon>Rhabditomorpha</taxon>
        <taxon>Rhabditoidea</taxon>
        <taxon>Rhabditidae</taxon>
        <taxon>Peloderinae</taxon>
        <taxon>Caenorhabditis</taxon>
    </lineage>
</organism>
<gene>
    <name evidence="6" type="primary">lin-52</name>
    <name evidence="6" type="ORF">ZK632.13</name>
</gene>
<accession>Q10120</accession>
<accession>G3MTX2</accession>
<name>LIN52_CAEEL</name>